<gene>
    <name evidence="1" type="primary">lig</name>
    <name type="ordered locus">YN1551_0851</name>
</gene>
<sequence>MEFKVIAEYFDKLEKISSRLQLTALLADLLSKSDKAIIDKVVYIIQGKLWPDFLGYPELGIGEKFLIKAISIATNTDENSVENLYKSIGDLGEVARRLKSKQQSTGILGFLGTSSKESLKVDKVYSTLSKVALTTGEGSRDLKIRLLAGLLKKADPLEAKFLVRFVEGRLRVGIGDATVLDAMAIAFGGGQSASEIVERAYNLRADLGNIAKIIVEKGIEALKTLKPEVGIPIRPMLAERLSNPEEILKKVGGSALVDYKYDGERAQIHKKDDKIFIFSRRLENITSQYPDVVEYISKYTEGKEFIIEGEIVAVDPESGEIRSFQELMHRKRKSDIYEAIKEYPVNVFLFDLMYYEDVDYTTKPLEVRRKLLESIVKPNDYVKIAHHIQVNNVEDLKSFFYRAISEGGEGVMVKAIGKDAIYQAGARGWLWIKLKRDYQSEMADTVDLVVVGGFYGKGKRGGKISSLLMAAYNPKTDTFESVCKVASGFSDEQLDELQKKLMEIKRDIKHPRVNSKMEPDIWVEPVYVAEIIGAEITISPLHTCCQDVVEKDAGLSIRFPRFIRWRDDKSPEDATTTDEILEMYNKQPKKKIESPPIDESV</sequence>
<protein>
    <recommendedName>
        <fullName evidence="1">DNA ligase</fullName>
        <ecNumber evidence="1">6.5.1.1</ecNumber>
    </recommendedName>
    <alternativeName>
        <fullName evidence="1">Polydeoxyribonucleotide synthase [ATP]</fullName>
    </alternativeName>
</protein>
<name>DNLI_SACI1</name>
<proteinExistence type="inferred from homology"/>
<accession>C3NF77</accession>
<evidence type="ECO:0000255" key="1">
    <source>
        <dbReference type="HAMAP-Rule" id="MF_00407"/>
    </source>
</evidence>
<evidence type="ECO:0000256" key="2">
    <source>
        <dbReference type="SAM" id="MobiDB-lite"/>
    </source>
</evidence>
<feature type="chain" id="PRO_1000205959" description="DNA ligase">
    <location>
        <begin position="1"/>
        <end position="601"/>
    </location>
</feature>
<feature type="region of interest" description="Disordered" evidence="2">
    <location>
        <begin position="568"/>
        <end position="601"/>
    </location>
</feature>
<feature type="active site" description="N6-AMP-lysine intermediate" evidence="1">
    <location>
        <position position="260"/>
    </location>
</feature>
<feature type="binding site" evidence="1">
    <location>
        <position position="258"/>
    </location>
    <ligand>
        <name>ATP</name>
        <dbReference type="ChEBI" id="CHEBI:30616"/>
    </ligand>
</feature>
<feature type="binding site" evidence="1">
    <location>
        <position position="265"/>
    </location>
    <ligand>
        <name>ATP</name>
        <dbReference type="ChEBI" id="CHEBI:30616"/>
    </ligand>
</feature>
<feature type="binding site" evidence="1">
    <location>
        <position position="280"/>
    </location>
    <ligand>
        <name>ATP</name>
        <dbReference type="ChEBI" id="CHEBI:30616"/>
    </ligand>
</feature>
<feature type="binding site" evidence="1">
    <location>
        <position position="310"/>
    </location>
    <ligand>
        <name>ATP</name>
        <dbReference type="ChEBI" id="CHEBI:30616"/>
    </ligand>
</feature>
<feature type="binding site" evidence="1">
    <location>
        <position position="350"/>
    </location>
    <ligand>
        <name>ATP</name>
        <dbReference type="ChEBI" id="CHEBI:30616"/>
    </ligand>
</feature>
<feature type="binding site" evidence="1">
    <location>
        <position position="427"/>
    </location>
    <ligand>
        <name>ATP</name>
        <dbReference type="ChEBI" id="CHEBI:30616"/>
    </ligand>
</feature>
<feature type="binding site" evidence="1">
    <location>
        <position position="433"/>
    </location>
    <ligand>
        <name>ATP</name>
        <dbReference type="ChEBI" id="CHEBI:30616"/>
    </ligand>
</feature>
<reference key="1">
    <citation type="journal article" date="2009" name="Proc. Natl. Acad. Sci. U.S.A.">
        <title>Biogeography of the Sulfolobus islandicus pan-genome.</title>
        <authorList>
            <person name="Reno M.L."/>
            <person name="Held N.L."/>
            <person name="Fields C.J."/>
            <person name="Burke P.V."/>
            <person name="Whitaker R.J."/>
        </authorList>
    </citation>
    <scope>NUCLEOTIDE SEQUENCE [LARGE SCALE GENOMIC DNA]</scope>
    <source>
        <strain>Y.N.15.51 / Yellowstone #2</strain>
    </source>
</reference>
<comment type="function">
    <text evidence="1">DNA ligase that seals nicks in double-stranded DNA during DNA replication, DNA recombination and DNA repair.</text>
</comment>
<comment type="catalytic activity">
    <reaction evidence="1">
        <text>ATP + (deoxyribonucleotide)n-3'-hydroxyl + 5'-phospho-(deoxyribonucleotide)m = (deoxyribonucleotide)n+m + AMP + diphosphate.</text>
        <dbReference type="EC" id="6.5.1.1"/>
    </reaction>
</comment>
<comment type="cofactor">
    <cofactor evidence="1">
        <name>Mg(2+)</name>
        <dbReference type="ChEBI" id="CHEBI:18420"/>
    </cofactor>
</comment>
<comment type="similarity">
    <text evidence="1">Belongs to the ATP-dependent DNA ligase family.</text>
</comment>
<dbReference type="EC" id="6.5.1.1" evidence="1"/>
<dbReference type="EMBL" id="CP001404">
    <property type="protein sequence ID" value="ACP47973.1"/>
    <property type="molecule type" value="Genomic_DNA"/>
</dbReference>
<dbReference type="RefSeq" id="WP_012717242.1">
    <property type="nucleotide sequence ID" value="NC_012623.1"/>
</dbReference>
<dbReference type="SMR" id="C3NF77"/>
<dbReference type="GeneID" id="7809533"/>
<dbReference type="KEGG" id="sin:YN1551_0851"/>
<dbReference type="HOGENOM" id="CLU_005138_6_0_2"/>
<dbReference type="Proteomes" id="UP000006818">
    <property type="component" value="Chromosome"/>
</dbReference>
<dbReference type="GO" id="GO:0005524">
    <property type="term" value="F:ATP binding"/>
    <property type="evidence" value="ECO:0007669"/>
    <property type="project" value="UniProtKB-UniRule"/>
</dbReference>
<dbReference type="GO" id="GO:0003677">
    <property type="term" value="F:DNA binding"/>
    <property type="evidence" value="ECO:0007669"/>
    <property type="project" value="InterPro"/>
</dbReference>
<dbReference type="GO" id="GO:0003910">
    <property type="term" value="F:DNA ligase (ATP) activity"/>
    <property type="evidence" value="ECO:0007669"/>
    <property type="project" value="UniProtKB-UniRule"/>
</dbReference>
<dbReference type="GO" id="GO:0046872">
    <property type="term" value="F:metal ion binding"/>
    <property type="evidence" value="ECO:0007669"/>
    <property type="project" value="UniProtKB-KW"/>
</dbReference>
<dbReference type="GO" id="GO:0051301">
    <property type="term" value="P:cell division"/>
    <property type="evidence" value="ECO:0007669"/>
    <property type="project" value="UniProtKB-KW"/>
</dbReference>
<dbReference type="GO" id="GO:0071897">
    <property type="term" value="P:DNA biosynthetic process"/>
    <property type="evidence" value="ECO:0007669"/>
    <property type="project" value="InterPro"/>
</dbReference>
<dbReference type="GO" id="GO:0006310">
    <property type="term" value="P:DNA recombination"/>
    <property type="evidence" value="ECO:0007669"/>
    <property type="project" value="UniProtKB-UniRule"/>
</dbReference>
<dbReference type="GO" id="GO:0006281">
    <property type="term" value="P:DNA repair"/>
    <property type="evidence" value="ECO:0007669"/>
    <property type="project" value="UniProtKB-UniRule"/>
</dbReference>
<dbReference type="GO" id="GO:0006273">
    <property type="term" value="P:lagging strand elongation"/>
    <property type="evidence" value="ECO:0007669"/>
    <property type="project" value="TreeGrafter"/>
</dbReference>
<dbReference type="CDD" id="cd07901">
    <property type="entry name" value="Adenylation_DNA_ligase_Arch_LigB"/>
    <property type="match status" value="1"/>
</dbReference>
<dbReference type="CDD" id="cd07969">
    <property type="entry name" value="OBF_DNA_ligase_I"/>
    <property type="match status" value="1"/>
</dbReference>
<dbReference type="FunFam" id="1.10.3260.10:FF:000007">
    <property type="entry name" value="DNA ligase"/>
    <property type="match status" value="1"/>
</dbReference>
<dbReference type="FunFam" id="2.40.50.140:FF:000062">
    <property type="entry name" value="DNA ligase"/>
    <property type="match status" value="1"/>
</dbReference>
<dbReference type="FunFam" id="3.30.470.30:FF:000012">
    <property type="entry name" value="Probable DNA ligase"/>
    <property type="match status" value="1"/>
</dbReference>
<dbReference type="Gene3D" id="1.10.3260.10">
    <property type="entry name" value="DNA ligase, ATP-dependent, N-terminal domain"/>
    <property type="match status" value="1"/>
</dbReference>
<dbReference type="Gene3D" id="3.30.470.30">
    <property type="entry name" value="DNA ligase/mRNA capping enzyme"/>
    <property type="match status" value="1"/>
</dbReference>
<dbReference type="Gene3D" id="2.40.50.140">
    <property type="entry name" value="Nucleic acid-binding proteins"/>
    <property type="match status" value="1"/>
</dbReference>
<dbReference type="HAMAP" id="MF_00407">
    <property type="entry name" value="DNA_ligase"/>
    <property type="match status" value="1"/>
</dbReference>
<dbReference type="InterPro" id="IPR050191">
    <property type="entry name" value="ATP-dep_DNA_ligase"/>
</dbReference>
<dbReference type="InterPro" id="IPR022865">
    <property type="entry name" value="DNA_ligae_ATP-dep_bac/arc"/>
</dbReference>
<dbReference type="InterPro" id="IPR000977">
    <property type="entry name" value="DNA_ligase_ATP-dep"/>
</dbReference>
<dbReference type="InterPro" id="IPR012309">
    <property type="entry name" value="DNA_ligase_ATP-dep_C"/>
</dbReference>
<dbReference type="InterPro" id="IPR012310">
    <property type="entry name" value="DNA_ligase_ATP-dep_cent"/>
</dbReference>
<dbReference type="InterPro" id="IPR016059">
    <property type="entry name" value="DNA_ligase_ATP-dep_CS"/>
</dbReference>
<dbReference type="InterPro" id="IPR012308">
    <property type="entry name" value="DNA_ligase_ATP-dep_N"/>
</dbReference>
<dbReference type="InterPro" id="IPR036599">
    <property type="entry name" value="DNA_ligase_N_sf"/>
</dbReference>
<dbReference type="InterPro" id="IPR012340">
    <property type="entry name" value="NA-bd_OB-fold"/>
</dbReference>
<dbReference type="NCBIfam" id="TIGR00574">
    <property type="entry name" value="dnl1"/>
    <property type="match status" value="1"/>
</dbReference>
<dbReference type="PANTHER" id="PTHR45674:SF4">
    <property type="entry name" value="DNA LIGASE 1"/>
    <property type="match status" value="1"/>
</dbReference>
<dbReference type="PANTHER" id="PTHR45674">
    <property type="entry name" value="DNA LIGASE 1/3 FAMILY MEMBER"/>
    <property type="match status" value="1"/>
</dbReference>
<dbReference type="Pfam" id="PF04679">
    <property type="entry name" value="DNA_ligase_A_C"/>
    <property type="match status" value="1"/>
</dbReference>
<dbReference type="Pfam" id="PF01068">
    <property type="entry name" value="DNA_ligase_A_M"/>
    <property type="match status" value="1"/>
</dbReference>
<dbReference type="Pfam" id="PF04675">
    <property type="entry name" value="DNA_ligase_A_N"/>
    <property type="match status" value="1"/>
</dbReference>
<dbReference type="SUPFAM" id="SSF117018">
    <property type="entry name" value="ATP-dependent DNA ligase DNA-binding domain"/>
    <property type="match status" value="1"/>
</dbReference>
<dbReference type="SUPFAM" id="SSF56091">
    <property type="entry name" value="DNA ligase/mRNA capping enzyme, catalytic domain"/>
    <property type="match status" value="1"/>
</dbReference>
<dbReference type="SUPFAM" id="SSF50249">
    <property type="entry name" value="Nucleic acid-binding proteins"/>
    <property type="match status" value="1"/>
</dbReference>
<dbReference type="PROSITE" id="PS00697">
    <property type="entry name" value="DNA_LIGASE_A1"/>
    <property type="match status" value="1"/>
</dbReference>
<dbReference type="PROSITE" id="PS00333">
    <property type="entry name" value="DNA_LIGASE_A2"/>
    <property type="match status" value="1"/>
</dbReference>
<dbReference type="PROSITE" id="PS50160">
    <property type="entry name" value="DNA_LIGASE_A3"/>
    <property type="match status" value="1"/>
</dbReference>
<organism>
    <name type="scientific">Saccharolobus islandicus (strain Y.N.15.51 / Yellowstone #2)</name>
    <name type="common">Sulfolobus islandicus</name>
    <dbReference type="NCBI Taxonomy" id="419942"/>
    <lineage>
        <taxon>Archaea</taxon>
        <taxon>Thermoproteota</taxon>
        <taxon>Thermoprotei</taxon>
        <taxon>Sulfolobales</taxon>
        <taxon>Sulfolobaceae</taxon>
        <taxon>Saccharolobus</taxon>
    </lineage>
</organism>
<keyword id="KW-0067">ATP-binding</keyword>
<keyword id="KW-0131">Cell cycle</keyword>
<keyword id="KW-0132">Cell division</keyword>
<keyword id="KW-0227">DNA damage</keyword>
<keyword id="KW-0233">DNA recombination</keyword>
<keyword id="KW-0234">DNA repair</keyword>
<keyword id="KW-0235">DNA replication</keyword>
<keyword id="KW-0436">Ligase</keyword>
<keyword id="KW-0460">Magnesium</keyword>
<keyword id="KW-0479">Metal-binding</keyword>
<keyword id="KW-0547">Nucleotide-binding</keyword>